<accession>B8J4E1</accession>
<comment type="function">
    <text evidence="1">Binds directly to 23S ribosomal RNA and is necessary for the in vitro assembly process of the 50S ribosomal subunit. It is not involved in the protein synthesizing functions of that subunit.</text>
</comment>
<comment type="similarity">
    <text evidence="1">Belongs to the bacterial ribosomal protein bL20 family.</text>
</comment>
<dbReference type="EMBL" id="CP001358">
    <property type="protein sequence ID" value="ACL48399.1"/>
    <property type="molecule type" value="Genomic_DNA"/>
</dbReference>
<dbReference type="SMR" id="B8J4E1"/>
<dbReference type="STRING" id="525146.Ddes_0487"/>
<dbReference type="KEGG" id="dds:Ddes_0487"/>
<dbReference type="eggNOG" id="COG0292">
    <property type="taxonomic scope" value="Bacteria"/>
</dbReference>
<dbReference type="HOGENOM" id="CLU_123265_0_1_7"/>
<dbReference type="GO" id="GO:1990904">
    <property type="term" value="C:ribonucleoprotein complex"/>
    <property type="evidence" value="ECO:0007669"/>
    <property type="project" value="UniProtKB-KW"/>
</dbReference>
<dbReference type="GO" id="GO:0005840">
    <property type="term" value="C:ribosome"/>
    <property type="evidence" value="ECO:0007669"/>
    <property type="project" value="UniProtKB-KW"/>
</dbReference>
<dbReference type="GO" id="GO:0019843">
    <property type="term" value="F:rRNA binding"/>
    <property type="evidence" value="ECO:0007669"/>
    <property type="project" value="UniProtKB-UniRule"/>
</dbReference>
<dbReference type="GO" id="GO:0003735">
    <property type="term" value="F:structural constituent of ribosome"/>
    <property type="evidence" value="ECO:0007669"/>
    <property type="project" value="InterPro"/>
</dbReference>
<dbReference type="GO" id="GO:0000027">
    <property type="term" value="P:ribosomal large subunit assembly"/>
    <property type="evidence" value="ECO:0007669"/>
    <property type="project" value="UniProtKB-UniRule"/>
</dbReference>
<dbReference type="GO" id="GO:0006412">
    <property type="term" value="P:translation"/>
    <property type="evidence" value="ECO:0007669"/>
    <property type="project" value="InterPro"/>
</dbReference>
<dbReference type="CDD" id="cd07026">
    <property type="entry name" value="Ribosomal_L20"/>
    <property type="match status" value="1"/>
</dbReference>
<dbReference type="FunFam" id="1.10.1900.20:FF:000001">
    <property type="entry name" value="50S ribosomal protein L20"/>
    <property type="match status" value="1"/>
</dbReference>
<dbReference type="Gene3D" id="6.10.160.10">
    <property type="match status" value="1"/>
</dbReference>
<dbReference type="Gene3D" id="1.10.1900.20">
    <property type="entry name" value="Ribosomal protein L20"/>
    <property type="match status" value="1"/>
</dbReference>
<dbReference type="HAMAP" id="MF_00382">
    <property type="entry name" value="Ribosomal_bL20"/>
    <property type="match status" value="1"/>
</dbReference>
<dbReference type="InterPro" id="IPR005813">
    <property type="entry name" value="Ribosomal_bL20"/>
</dbReference>
<dbReference type="InterPro" id="IPR049946">
    <property type="entry name" value="RIBOSOMAL_L20_CS"/>
</dbReference>
<dbReference type="InterPro" id="IPR035566">
    <property type="entry name" value="Ribosomal_protein_bL20_C"/>
</dbReference>
<dbReference type="NCBIfam" id="TIGR01032">
    <property type="entry name" value="rplT_bact"/>
    <property type="match status" value="1"/>
</dbReference>
<dbReference type="PANTHER" id="PTHR10986">
    <property type="entry name" value="39S RIBOSOMAL PROTEIN L20"/>
    <property type="match status" value="1"/>
</dbReference>
<dbReference type="Pfam" id="PF00453">
    <property type="entry name" value="Ribosomal_L20"/>
    <property type="match status" value="1"/>
</dbReference>
<dbReference type="PRINTS" id="PR00062">
    <property type="entry name" value="RIBOSOMALL20"/>
</dbReference>
<dbReference type="SUPFAM" id="SSF74731">
    <property type="entry name" value="Ribosomal protein L20"/>
    <property type="match status" value="1"/>
</dbReference>
<dbReference type="PROSITE" id="PS00937">
    <property type="entry name" value="RIBOSOMAL_L20"/>
    <property type="match status" value="1"/>
</dbReference>
<keyword id="KW-0687">Ribonucleoprotein</keyword>
<keyword id="KW-0689">Ribosomal protein</keyword>
<keyword id="KW-0694">RNA-binding</keyword>
<keyword id="KW-0699">rRNA-binding</keyword>
<feature type="chain" id="PRO_1000193956" description="Large ribosomal subunit protein bL20">
    <location>
        <begin position="1"/>
        <end position="118"/>
    </location>
</feature>
<sequence length="118" mass="13567">MRVKRGLSGHRRHKKYLTAAKGFRGGRSRLYRTAREAVERSLQYAYVGRKLRKRDFRTLWILRINAGARLSGLSYSRFMHGLKLAGIELNRKVLADLAVYKKDDFAKIVDMAKAALGK</sequence>
<name>RL20_DESDA</name>
<gene>
    <name evidence="1" type="primary">rplT</name>
    <name type="ordered locus">Ddes_0487</name>
</gene>
<reference key="1">
    <citation type="submission" date="2009-01" db="EMBL/GenBank/DDBJ databases">
        <title>Complete sequence of Desulfovibrio desulfuricans subsp. desulfuricans str. ATCC 27774.</title>
        <authorList>
            <consortium name="US DOE Joint Genome Institute"/>
            <person name="Lucas S."/>
            <person name="Copeland A."/>
            <person name="Lapidus A."/>
            <person name="Glavina del Rio T."/>
            <person name="Tice H."/>
            <person name="Bruce D."/>
            <person name="Goodwin L."/>
            <person name="Pitluck S."/>
            <person name="Sims D."/>
            <person name="Lu M."/>
            <person name="Kiss H."/>
            <person name="Meineke L."/>
            <person name="Brettin T."/>
            <person name="Detter J.C."/>
            <person name="Han C."/>
            <person name="Larimer F."/>
            <person name="Land M."/>
            <person name="Hauser L."/>
            <person name="Kyrpides N."/>
            <person name="Ovchinnikova G."/>
            <person name="Hazen T.C."/>
        </authorList>
    </citation>
    <scope>NUCLEOTIDE SEQUENCE [LARGE SCALE GENOMIC DNA]</scope>
    <source>
        <strain>ATCC 27774 / DSM 6949 / MB</strain>
    </source>
</reference>
<evidence type="ECO:0000255" key="1">
    <source>
        <dbReference type="HAMAP-Rule" id="MF_00382"/>
    </source>
</evidence>
<evidence type="ECO:0000305" key="2"/>
<proteinExistence type="inferred from homology"/>
<organism>
    <name type="scientific">Desulfovibrio desulfuricans (strain ATCC 27774 / DSM 6949 / MB)</name>
    <dbReference type="NCBI Taxonomy" id="525146"/>
    <lineage>
        <taxon>Bacteria</taxon>
        <taxon>Pseudomonadati</taxon>
        <taxon>Thermodesulfobacteriota</taxon>
        <taxon>Desulfovibrionia</taxon>
        <taxon>Desulfovibrionales</taxon>
        <taxon>Desulfovibrionaceae</taxon>
        <taxon>Desulfovibrio</taxon>
    </lineage>
</organism>
<protein>
    <recommendedName>
        <fullName evidence="1">Large ribosomal subunit protein bL20</fullName>
    </recommendedName>
    <alternativeName>
        <fullName evidence="2">50S ribosomal protein L20</fullName>
    </alternativeName>
</protein>